<accession>A5EW39</accession>
<gene>
    <name evidence="1" type="primary">tsaC</name>
    <name type="synonym">rimN</name>
    <name type="ordered locus">DNO_0343</name>
</gene>
<sequence length="190" mass="20660">MNEKACWQLPQDKESVYRHIFAGGVFAYPTEAVYGLGGNPADERAVCEILRLKGRTAAKGLIMVAGNWAQCCGWVSGVSKRDQAEMMDWAGDYPTTFIVYAGEKLCAHVATADGKTAIRISQHPLIQELCALIGQPLLSTSANLSGQEPARSVAAVRQYFPDLPMVLGALGAAERPSRIIDWHSRQVIRA</sequence>
<evidence type="ECO:0000255" key="1">
    <source>
        <dbReference type="HAMAP-Rule" id="MF_01852"/>
    </source>
</evidence>
<dbReference type="EC" id="2.7.7.87" evidence="1"/>
<dbReference type="EMBL" id="CP000513">
    <property type="protein sequence ID" value="ABQ13214.1"/>
    <property type="molecule type" value="Genomic_DNA"/>
</dbReference>
<dbReference type="RefSeq" id="WP_012030686.1">
    <property type="nucleotide sequence ID" value="NC_009446.1"/>
</dbReference>
<dbReference type="SMR" id="A5EW39"/>
<dbReference type="STRING" id="246195.DNO_0343"/>
<dbReference type="KEGG" id="dno:DNO_0343"/>
<dbReference type="eggNOG" id="COG0009">
    <property type="taxonomic scope" value="Bacteria"/>
</dbReference>
<dbReference type="HOGENOM" id="CLU_031397_6_0_6"/>
<dbReference type="OrthoDB" id="9814580at2"/>
<dbReference type="Proteomes" id="UP000000248">
    <property type="component" value="Chromosome"/>
</dbReference>
<dbReference type="GO" id="GO:0005737">
    <property type="term" value="C:cytoplasm"/>
    <property type="evidence" value="ECO:0007669"/>
    <property type="project" value="UniProtKB-SubCell"/>
</dbReference>
<dbReference type="GO" id="GO:0005524">
    <property type="term" value="F:ATP binding"/>
    <property type="evidence" value="ECO:0007669"/>
    <property type="project" value="UniProtKB-UniRule"/>
</dbReference>
<dbReference type="GO" id="GO:0003725">
    <property type="term" value="F:double-stranded RNA binding"/>
    <property type="evidence" value="ECO:0007669"/>
    <property type="project" value="InterPro"/>
</dbReference>
<dbReference type="GO" id="GO:0061710">
    <property type="term" value="F:L-threonylcarbamoyladenylate synthase"/>
    <property type="evidence" value="ECO:0007669"/>
    <property type="project" value="UniProtKB-EC"/>
</dbReference>
<dbReference type="GO" id="GO:0000049">
    <property type="term" value="F:tRNA binding"/>
    <property type="evidence" value="ECO:0007669"/>
    <property type="project" value="TreeGrafter"/>
</dbReference>
<dbReference type="GO" id="GO:0006450">
    <property type="term" value="P:regulation of translational fidelity"/>
    <property type="evidence" value="ECO:0007669"/>
    <property type="project" value="TreeGrafter"/>
</dbReference>
<dbReference type="GO" id="GO:0002949">
    <property type="term" value="P:tRNA threonylcarbamoyladenosine modification"/>
    <property type="evidence" value="ECO:0007669"/>
    <property type="project" value="UniProtKB-UniRule"/>
</dbReference>
<dbReference type="Gene3D" id="3.90.870.10">
    <property type="entry name" value="DHBP synthase"/>
    <property type="match status" value="1"/>
</dbReference>
<dbReference type="HAMAP" id="MF_01852">
    <property type="entry name" value="TsaC"/>
    <property type="match status" value="1"/>
</dbReference>
<dbReference type="InterPro" id="IPR017945">
    <property type="entry name" value="DHBP_synth_RibB-like_a/b_dom"/>
</dbReference>
<dbReference type="InterPro" id="IPR006070">
    <property type="entry name" value="Sua5-like_dom"/>
</dbReference>
<dbReference type="InterPro" id="IPR023535">
    <property type="entry name" value="TC-AMP_synthase"/>
</dbReference>
<dbReference type="InterPro" id="IPR050156">
    <property type="entry name" value="TC-AMP_synthase_SUA5"/>
</dbReference>
<dbReference type="PANTHER" id="PTHR17490">
    <property type="entry name" value="SUA5"/>
    <property type="match status" value="1"/>
</dbReference>
<dbReference type="PANTHER" id="PTHR17490:SF18">
    <property type="entry name" value="THREONYLCARBAMOYL-AMP SYNTHASE"/>
    <property type="match status" value="1"/>
</dbReference>
<dbReference type="Pfam" id="PF01300">
    <property type="entry name" value="Sua5_yciO_yrdC"/>
    <property type="match status" value="1"/>
</dbReference>
<dbReference type="SUPFAM" id="SSF55821">
    <property type="entry name" value="YrdC/RibB"/>
    <property type="match status" value="1"/>
</dbReference>
<dbReference type="PROSITE" id="PS51163">
    <property type="entry name" value="YRDC"/>
    <property type="match status" value="1"/>
</dbReference>
<reference key="1">
    <citation type="journal article" date="2007" name="Nat. Biotechnol.">
        <title>Genome sequence and identification of candidate vaccine antigens from the animal pathogen Dichelobacter nodosus.</title>
        <authorList>
            <person name="Myers G.S.A."/>
            <person name="Parker D."/>
            <person name="Al-Hasani K."/>
            <person name="Kennan R.M."/>
            <person name="Seemann T."/>
            <person name="Ren Q."/>
            <person name="Badger J.H."/>
            <person name="Selengut J.D."/>
            <person name="Deboy R.T."/>
            <person name="Tettelin H."/>
            <person name="Boyce J.D."/>
            <person name="McCarl V.P."/>
            <person name="Han X."/>
            <person name="Nelson W.C."/>
            <person name="Madupu R."/>
            <person name="Mohamoud Y."/>
            <person name="Holley T."/>
            <person name="Fedorova N."/>
            <person name="Khouri H."/>
            <person name="Bottomley S.P."/>
            <person name="Whittington R.J."/>
            <person name="Adler B."/>
            <person name="Songer J.G."/>
            <person name="Rood J.I."/>
            <person name="Paulsen I.T."/>
        </authorList>
    </citation>
    <scope>NUCLEOTIDE SEQUENCE [LARGE SCALE GENOMIC DNA]</scope>
    <source>
        <strain>VCS1703A</strain>
    </source>
</reference>
<protein>
    <recommendedName>
        <fullName evidence="1">Threonylcarbamoyl-AMP synthase</fullName>
        <shortName evidence="1">TC-AMP synthase</shortName>
        <ecNumber evidence="1">2.7.7.87</ecNumber>
    </recommendedName>
    <alternativeName>
        <fullName evidence="1">L-threonylcarbamoyladenylate synthase</fullName>
    </alternativeName>
    <alternativeName>
        <fullName evidence="1">t(6)A37 threonylcarbamoyladenosine biosynthesis protein TsaC</fullName>
    </alternativeName>
    <alternativeName>
        <fullName evidence="1">tRNA threonylcarbamoyladenosine biosynthesis protein TsaC</fullName>
    </alternativeName>
</protein>
<proteinExistence type="inferred from homology"/>
<feature type="chain" id="PRO_0000403977" description="Threonylcarbamoyl-AMP synthase">
    <location>
        <begin position="1"/>
        <end position="190"/>
    </location>
</feature>
<feature type="domain" description="YrdC-like" evidence="1">
    <location>
        <begin position="10"/>
        <end position="190"/>
    </location>
</feature>
<name>TSAC_DICNV</name>
<keyword id="KW-0067">ATP-binding</keyword>
<keyword id="KW-0963">Cytoplasm</keyword>
<keyword id="KW-0547">Nucleotide-binding</keyword>
<keyword id="KW-0548">Nucleotidyltransferase</keyword>
<keyword id="KW-1185">Reference proteome</keyword>
<keyword id="KW-0808">Transferase</keyword>
<keyword id="KW-0819">tRNA processing</keyword>
<organism>
    <name type="scientific">Dichelobacter nodosus (strain VCS1703A)</name>
    <dbReference type="NCBI Taxonomy" id="246195"/>
    <lineage>
        <taxon>Bacteria</taxon>
        <taxon>Pseudomonadati</taxon>
        <taxon>Pseudomonadota</taxon>
        <taxon>Gammaproteobacteria</taxon>
        <taxon>Cardiobacteriales</taxon>
        <taxon>Cardiobacteriaceae</taxon>
        <taxon>Dichelobacter</taxon>
    </lineage>
</organism>
<comment type="function">
    <text evidence="1">Required for the formation of a threonylcarbamoyl group on adenosine at position 37 (t(6)A37) in tRNAs that read codons beginning with adenine. Catalyzes the conversion of L-threonine, HCO(3)(-)/CO(2) and ATP to give threonylcarbamoyl-AMP (TC-AMP) as the acyladenylate intermediate, with the release of diphosphate.</text>
</comment>
<comment type="catalytic activity">
    <reaction evidence="1">
        <text>L-threonine + hydrogencarbonate + ATP = L-threonylcarbamoyladenylate + diphosphate + H2O</text>
        <dbReference type="Rhea" id="RHEA:36407"/>
        <dbReference type="ChEBI" id="CHEBI:15377"/>
        <dbReference type="ChEBI" id="CHEBI:17544"/>
        <dbReference type="ChEBI" id="CHEBI:30616"/>
        <dbReference type="ChEBI" id="CHEBI:33019"/>
        <dbReference type="ChEBI" id="CHEBI:57926"/>
        <dbReference type="ChEBI" id="CHEBI:73682"/>
        <dbReference type="EC" id="2.7.7.87"/>
    </reaction>
</comment>
<comment type="subcellular location">
    <subcellularLocation>
        <location evidence="1">Cytoplasm</location>
    </subcellularLocation>
</comment>
<comment type="similarity">
    <text evidence="1">Belongs to the SUA5 family. TsaC subfamily.</text>
</comment>